<comment type="function">
    <text evidence="1">Mnh complex is a Na(+)/H(+) antiporter involved in Na(+) excretion.</text>
</comment>
<comment type="subunit">
    <text evidence="1">May form a heterooligomeric complex that consists of seven subunits: mnhA1, mnhB1, mnhC1, mnhD1, mnhE1, mnhF1 and mnhG1.</text>
</comment>
<comment type="subcellular location">
    <subcellularLocation>
        <location evidence="3">Cell membrane</location>
        <topology evidence="3">Multi-pass membrane protein</topology>
    </subcellularLocation>
</comment>
<comment type="similarity">
    <text evidence="3">Belongs to the CPA3 antiporters (TC 2.A.63) subunit E family.</text>
</comment>
<feature type="chain" id="PRO_0000372146" description="Na(+)/H(+) antiporter subunit E1">
    <location>
        <begin position="1"/>
        <end position="159"/>
    </location>
</feature>
<feature type="transmembrane region" description="Helical" evidence="2">
    <location>
        <begin position="1"/>
        <end position="21"/>
    </location>
</feature>
<feature type="transmembrane region" description="Helical" evidence="2">
    <location>
        <begin position="27"/>
        <end position="47"/>
    </location>
</feature>
<feature type="transmembrane region" description="Helical" evidence="2">
    <location>
        <begin position="49"/>
        <end position="69"/>
    </location>
</feature>
<feature type="transmembrane region" description="Helical" evidence="2">
    <location>
        <begin position="101"/>
        <end position="121"/>
    </location>
</feature>
<name>MNHE1_STAAE</name>
<protein>
    <recommendedName>
        <fullName>Na(+)/H(+) antiporter subunit E1</fullName>
    </recommendedName>
    <alternativeName>
        <fullName>Mnh complex subunit E1</fullName>
    </alternativeName>
</protein>
<evidence type="ECO:0000250" key="1"/>
<evidence type="ECO:0000255" key="2"/>
<evidence type="ECO:0000305" key="3"/>
<organism>
    <name type="scientific">Staphylococcus aureus (strain Newman)</name>
    <dbReference type="NCBI Taxonomy" id="426430"/>
    <lineage>
        <taxon>Bacteria</taxon>
        <taxon>Bacillati</taxon>
        <taxon>Bacillota</taxon>
        <taxon>Bacilli</taxon>
        <taxon>Bacillales</taxon>
        <taxon>Staphylococcaceae</taxon>
        <taxon>Staphylococcus</taxon>
    </lineage>
</organism>
<sequence length="159" mass="18319">MAVQLVLNFIIAVFWLFVTNSYTTNNFVLGFIFGLVLVYLLHRVLPGRFYVITLYRIIKLVIIFLIELIKANFDVLKIIIKPSIKNEPGFFVYHTDLKKDWQIVLLSNLITLTPGTVVLGVSDDRTKIYIHAIDFSTKEQEVESIKTSLEKIVREVGEI</sequence>
<keyword id="KW-0050">Antiport</keyword>
<keyword id="KW-1003">Cell membrane</keyword>
<keyword id="KW-0375">Hydrogen ion transport</keyword>
<keyword id="KW-0406">Ion transport</keyword>
<keyword id="KW-0472">Membrane</keyword>
<keyword id="KW-0915">Sodium</keyword>
<keyword id="KW-0739">Sodium transport</keyword>
<keyword id="KW-0812">Transmembrane</keyword>
<keyword id="KW-1133">Transmembrane helix</keyword>
<keyword id="KW-0813">Transport</keyword>
<gene>
    <name type="primary">mnhE1</name>
    <name type="ordered locus">NWMN_0818</name>
</gene>
<dbReference type="EMBL" id="AP009351">
    <property type="protein sequence ID" value="BAF67090.1"/>
    <property type="molecule type" value="Genomic_DNA"/>
</dbReference>
<dbReference type="RefSeq" id="WP_000290674.1">
    <property type="nucleotide sequence ID" value="NZ_JBBIAE010000002.1"/>
</dbReference>
<dbReference type="SMR" id="A6QFF8"/>
<dbReference type="KEGG" id="sae:NWMN_0818"/>
<dbReference type="HOGENOM" id="CLU_086615_3_2_9"/>
<dbReference type="Proteomes" id="UP000006386">
    <property type="component" value="Chromosome"/>
</dbReference>
<dbReference type="GO" id="GO:0005886">
    <property type="term" value="C:plasma membrane"/>
    <property type="evidence" value="ECO:0007669"/>
    <property type="project" value="UniProtKB-SubCell"/>
</dbReference>
<dbReference type="GO" id="GO:0015297">
    <property type="term" value="F:antiporter activity"/>
    <property type="evidence" value="ECO:0007669"/>
    <property type="project" value="UniProtKB-KW"/>
</dbReference>
<dbReference type="GO" id="GO:0008324">
    <property type="term" value="F:monoatomic cation transmembrane transporter activity"/>
    <property type="evidence" value="ECO:0007669"/>
    <property type="project" value="InterPro"/>
</dbReference>
<dbReference type="GO" id="GO:1902600">
    <property type="term" value="P:proton transmembrane transport"/>
    <property type="evidence" value="ECO:0007669"/>
    <property type="project" value="UniProtKB-KW"/>
</dbReference>
<dbReference type="GO" id="GO:0006814">
    <property type="term" value="P:sodium ion transport"/>
    <property type="evidence" value="ECO:0007669"/>
    <property type="project" value="UniProtKB-KW"/>
</dbReference>
<dbReference type="InterPro" id="IPR004847">
    <property type="entry name" value="Antiport_suE1"/>
</dbReference>
<dbReference type="InterPro" id="IPR002758">
    <property type="entry name" value="Cation_antiport_E"/>
</dbReference>
<dbReference type="NCBIfam" id="TIGR00942">
    <property type="entry name" value="2a6301s05"/>
    <property type="match status" value="1"/>
</dbReference>
<dbReference type="NCBIfam" id="NF009291">
    <property type="entry name" value="PRK12651.1-1"/>
    <property type="match status" value="1"/>
</dbReference>
<dbReference type="PANTHER" id="PTHR34584">
    <property type="entry name" value="NA(+)/H(+) ANTIPORTER SUBUNIT E1"/>
    <property type="match status" value="1"/>
</dbReference>
<dbReference type="PANTHER" id="PTHR34584:SF1">
    <property type="entry name" value="NA(+)_H(+) ANTIPORTER SUBUNIT E1"/>
    <property type="match status" value="1"/>
</dbReference>
<dbReference type="Pfam" id="PF01899">
    <property type="entry name" value="MNHE"/>
    <property type="match status" value="1"/>
</dbReference>
<dbReference type="PIRSF" id="PIRSF019239">
    <property type="entry name" value="MrpE"/>
    <property type="match status" value="1"/>
</dbReference>
<proteinExistence type="inferred from homology"/>
<accession>A6QFF8</accession>
<reference key="1">
    <citation type="journal article" date="2008" name="J. Bacteriol.">
        <title>Genome sequence of Staphylococcus aureus strain Newman and comparative analysis of staphylococcal genomes: polymorphism and evolution of two major pathogenicity islands.</title>
        <authorList>
            <person name="Baba T."/>
            <person name="Bae T."/>
            <person name="Schneewind O."/>
            <person name="Takeuchi F."/>
            <person name="Hiramatsu K."/>
        </authorList>
    </citation>
    <scope>NUCLEOTIDE SEQUENCE [LARGE SCALE GENOMIC DNA]</scope>
    <source>
        <strain>Newman</strain>
    </source>
</reference>